<name>RPOB_ANAD2</name>
<gene>
    <name evidence="1" type="primary">rpoB</name>
    <name type="ordered locus">A2cp1_2359</name>
</gene>
<reference key="1">
    <citation type="submission" date="2009-01" db="EMBL/GenBank/DDBJ databases">
        <title>Complete sequence of Anaeromyxobacter dehalogenans 2CP-1.</title>
        <authorList>
            <person name="Lucas S."/>
            <person name="Copeland A."/>
            <person name="Lapidus A."/>
            <person name="Glavina del Rio T."/>
            <person name="Dalin E."/>
            <person name="Tice H."/>
            <person name="Bruce D."/>
            <person name="Goodwin L."/>
            <person name="Pitluck S."/>
            <person name="Saunders E."/>
            <person name="Brettin T."/>
            <person name="Detter J.C."/>
            <person name="Han C."/>
            <person name="Larimer F."/>
            <person name="Land M."/>
            <person name="Hauser L."/>
            <person name="Kyrpides N."/>
            <person name="Ovchinnikova G."/>
            <person name="Beliaev A.S."/>
            <person name="Richardson P."/>
        </authorList>
    </citation>
    <scope>NUCLEOTIDE SEQUENCE [LARGE SCALE GENOMIC DNA]</scope>
    <source>
        <strain>2CP-1 / ATCC BAA-258</strain>
    </source>
</reference>
<accession>B8JB70</accession>
<proteinExistence type="inferred from homology"/>
<feature type="chain" id="PRO_1000165784" description="DNA-directed RNA polymerase subunit beta">
    <location>
        <begin position="1"/>
        <end position="1422"/>
    </location>
</feature>
<feature type="region of interest" description="Disordered" evidence="2">
    <location>
        <begin position="1392"/>
        <end position="1422"/>
    </location>
</feature>
<evidence type="ECO:0000255" key="1">
    <source>
        <dbReference type="HAMAP-Rule" id="MF_01321"/>
    </source>
</evidence>
<evidence type="ECO:0000256" key="2">
    <source>
        <dbReference type="SAM" id="MobiDB-lite"/>
    </source>
</evidence>
<protein>
    <recommendedName>
        <fullName evidence="1">DNA-directed RNA polymerase subunit beta</fullName>
        <shortName evidence="1">RNAP subunit beta</shortName>
        <ecNumber evidence="1">2.7.7.6</ecNumber>
    </recommendedName>
    <alternativeName>
        <fullName evidence="1">RNA polymerase subunit beta</fullName>
    </alternativeName>
    <alternativeName>
        <fullName evidence="1">Transcriptase subunit beta</fullName>
    </alternativeName>
</protein>
<comment type="function">
    <text evidence="1">DNA-dependent RNA polymerase catalyzes the transcription of DNA into RNA using the four ribonucleoside triphosphates as substrates.</text>
</comment>
<comment type="catalytic activity">
    <reaction evidence="1">
        <text>RNA(n) + a ribonucleoside 5'-triphosphate = RNA(n+1) + diphosphate</text>
        <dbReference type="Rhea" id="RHEA:21248"/>
        <dbReference type="Rhea" id="RHEA-COMP:14527"/>
        <dbReference type="Rhea" id="RHEA-COMP:17342"/>
        <dbReference type="ChEBI" id="CHEBI:33019"/>
        <dbReference type="ChEBI" id="CHEBI:61557"/>
        <dbReference type="ChEBI" id="CHEBI:140395"/>
        <dbReference type="EC" id="2.7.7.6"/>
    </reaction>
</comment>
<comment type="subunit">
    <text evidence="1">The RNAP catalytic core consists of 2 alpha, 1 beta, 1 beta' and 1 omega subunit. When a sigma factor is associated with the core the holoenzyme is formed, which can initiate transcription.</text>
</comment>
<comment type="similarity">
    <text evidence="1">Belongs to the RNA polymerase beta chain family.</text>
</comment>
<dbReference type="EC" id="2.7.7.6" evidence="1"/>
<dbReference type="EMBL" id="CP001359">
    <property type="protein sequence ID" value="ACL65697.1"/>
    <property type="molecule type" value="Genomic_DNA"/>
</dbReference>
<dbReference type="RefSeq" id="WP_012526295.1">
    <property type="nucleotide sequence ID" value="NC_011891.1"/>
</dbReference>
<dbReference type="SMR" id="B8JB70"/>
<dbReference type="KEGG" id="acp:A2cp1_2359"/>
<dbReference type="HOGENOM" id="CLU_000524_4_3_7"/>
<dbReference type="Proteomes" id="UP000007089">
    <property type="component" value="Chromosome"/>
</dbReference>
<dbReference type="GO" id="GO:0000428">
    <property type="term" value="C:DNA-directed RNA polymerase complex"/>
    <property type="evidence" value="ECO:0007669"/>
    <property type="project" value="UniProtKB-KW"/>
</dbReference>
<dbReference type="GO" id="GO:0003677">
    <property type="term" value="F:DNA binding"/>
    <property type="evidence" value="ECO:0007669"/>
    <property type="project" value="UniProtKB-UniRule"/>
</dbReference>
<dbReference type="GO" id="GO:0003899">
    <property type="term" value="F:DNA-directed RNA polymerase activity"/>
    <property type="evidence" value="ECO:0007669"/>
    <property type="project" value="UniProtKB-UniRule"/>
</dbReference>
<dbReference type="GO" id="GO:0032549">
    <property type="term" value="F:ribonucleoside binding"/>
    <property type="evidence" value="ECO:0007669"/>
    <property type="project" value="InterPro"/>
</dbReference>
<dbReference type="GO" id="GO:0006351">
    <property type="term" value="P:DNA-templated transcription"/>
    <property type="evidence" value="ECO:0007669"/>
    <property type="project" value="UniProtKB-UniRule"/>
</dbReference>
<dbReference type="CDD" id="cd00653">
    <property type="entry name" value="RNA_pol_B_RPB2"/>
    <property type="match status" value="1"/>
</dbReference>
<dbReference type="FunFam" id="2.40.50.100:FF:000006">
    <property type="entry name" value="DNA-directed RNA polymerase subunit beta"/>
    <property type="match status" value="1"/>
</dbReference>
<dbReference type="FunFam" id="3.90.1800.10:FF:000001">
    <property type="entry name" value="DNA-directed RNA polymerase subunit beta"/>
    <property type="match status" value="1"/>
</dbReference>
<dbReference type="Gene3D" id="2.40.50.100">
    <property type="match status" value="1"/>
</dbReference>
<dbReference type="Gene3D" id="2.40.50.150">
    <property type="match status" value="1"/>
</dbReference>
<dbReference type="Gene3D" id="3.90.1100.10">
    <property type="match status" value="1"/>
</dbReference>
<dbReference type="Gene3D" id="2.30.150.10">
    <property type="entry name" value="DNA-directed RNA polymerase, beta subunit, external 1 domain"/>
    <property type="match status" value="1"/>
</dbReference>
<dbReference type="Gene3D" id="2.40.270.10">
    <property type="entry name" value="DNA-directed RNA polymerase, subunit 2, domain 6"/>
    <property type="match status" value="1"/>
</dbReference>
<dbReference type="Gene3D" id="3.90.1800.10">
    <property type="entry name" value="RNA polymerase alpha subunit dimerisation domain"/>
    <property type="match status" value="1"/>
</dbReference>
<dbReference type="Gene3D" id="3.90.1110.10">
    <property type="entry name" value="RNA polymerase Rpb2, domain 2"/>
    <property type="match status" value="1"/>
</dbReference>
<dbReference type="HAMAP" id="MF_01321">
    <property type="entry name" value="RNApol_bact_RpoB"/>
    <property type="match status" value="1"/>
</dbReference>
<dbReference type="InterPro" id="IPR042107">
    <property type="entry name" value="DNA-dir_RNA_pol_bsu_ext_1_sf"/>
</dbReference>
<dbReference type="InterPro" id="IPR019462">
    <property type="entry name" value="DNA-dir_RNA_pol_bsu_external_1"/>
</dbReference>
<dbReference type="InterPro" id="IPR015712">
    <property type="entry name" value="DNA-dir_RNA_pol_su2"/>
</dbReference>
<dbReference type="InterPro" id="IPR007120">
    <property type="entry name" value="DNA-dir_RNAP_su2_dom"/>
</dbReference>
<dbReference type="InterPro" id="IPR037033">
    <property type="entry name" value="DNA-dir_RNAP_su2_hyb_sf"/>
</dbReference>
<dbReference type="InterPro" id="IPR010243">
    <property type="entry name" value="RNA_pol_bsu_bac"/>
</dbReference>
<dbReference type="InterPro" id="IPR007121">
    <property type="entry name" value="RNA_pol_bsu_CS"/>
</dbReference>
<dbReference type="InterPro" id="IPR007644">
    <property type="entry name" value="RNA_pol_bsu_protrusion"/>
</dbReference>
<dbReference type="InterPro" id="IPR007642">
    <property type="entry name" value="RNA_pol_Rpb2_2"/>
</dbReference>
<dbReference type="InterPro" id="IPR037034">
    <property type="entry name" value="RNA_pol_Rpb2_2_sf"/>
</dbReference>
<dbReference type="InterPro" id="IPR007645">
    <property type="entry name" value="RNA_pol_Rpb2_3"/>
</dbReference>
<dbReference type="InterPro" id="IPR007641">
    <property type="entry name" value="RNA_pol_Rpb2_7"/>
</dbReference>
<dbReference type="InterPro" id="IPR014724">
    <property type="entry name" value="RNA_pol_RPB2_OB-fold"/>
</dbReference>
<dbReference type="NCBIfam" id="NF001616">
    <property type="entry name" value="PRK00405.1"/>
    <property type="match status" value="1"/>
</dbReference>
<dbReference type="NCBIfam" id="TIGR02013">
    <property type="entry name" value="rpoB"/>
    <property type="match status" value="1"/>
</dbReference>
<dbReference type="PANTHER" id="PTHR20856">
    <property type="entry name" value="DNA-DIRECTED RNA POLYMERASE I SUBUNIT 2"/>
    <property type="match status" value="1"/>
</dbReference>
<dbReference type="Pfam" id="PF04563">
    <property type="entry name" value="RNA_pol_Rpb2_1"/>
    <property type="match status" value="1"/>
</dbReference>
<dbReference type="Pfam" id="PF04561">
    <property type="entry name" value="RNA_pol_Rpb2_2"/>
    <property type="match status" value="2"/>
</dbReference>
<dbReference type="Pfam" id="PF04565">
    <property type="entry name" value="RNA_pol_Rpb2_3"/>
    <property type="match status" value="1"/>
</dbReference>
<dbReference type="Pfam" id="PF10385">
    <property type="entry name" value="RNA_pol_Rpb2_45"/>
    <property type="match status" value="1"/>
</dbReference>
<dbReference type="Pfam" id="PF00562">
    <property type="entry name" value="RNA_pol_Rpb2_6"/>
    <property type="match status" value="1"/>
</dbReference>
<dbReference type="Pfam" id="PF04560">
    <property type="entry name" value="RNA_pol_Rpb2_7"/>
    <property type="match status" value="1"/>
</dbReference>
<dbReference type="SUPFAM" id="SSF64484">
    <property type="entry name" value="beta and beta-prime subunits of DNA dependent RNA-polymerase"/>
    <property type="match status" value="1"/>
</dbReference>
<dbReference type="PROSITE" id="PS01166">
    <property type="entry name" value="RNA_POL_BETA"/>
    <property type="match status" value="1"/>
</dbReference>
<keyword id="KW-0240">DNA-directed RNA polymerase</keyword>
<keyword id="KW-0548">Nucleotidyltransferase</keyword>
<keyword id="KW-0804">Transcription</keyword>
<keyword id="KW-0808">Transferase</keyword>
<organism>
    <name type="scientific">Anaeromyxobacter dehalogenans (strain 2CP-1 / ATCC BAA-258)</name>
    <dbReference type="NCBI Taxonomy" id="455488"/>
    <lineage>
        <taxon>Bacteria</taxon>
        <taxon>Pseudomonadati</taxon>
        <taxon>Myxococcota</taxon>
        <taxon>Myxococcia</taxon>
        <taxon>Myxococcales</taxon>
        <taxon>Cystobacterineae</taxon>
        <taxon>Anaeromyxobacteraceae</taxon>
        <taxon>Anaeromyxobacter</taxon>
    </lineage>
</organism>
<sequence>MATTIQNNFRIRRNFGKINKIAEIPNLIAIQKFSYDKFLQADVPPEKRDDTGLQGVFKSVFPIKDFNETSSLEFVSYHLEKPKYDVDECHQRGMTYSAPIKVVVRLVVWDKDEETGAQSIRDVKEQEVYFGEIPLMTENGTFIINGTERVVVSQLHRSPGAFFDHDKGKSHSSGKLLYNARIIPYRGSWIDFEFDHKDILYVRIDRRRKLPATVLLRALGATPDTAKKDPVEFHGSAEEILKYYYDTETIRIEGKGKYEKDLVPDLLKGQRATRDIRDPKSNEVIVKKNRKYTESAIKKLVAAKMKSLPVEPEEVYTKISAEDVVDETTGEVLLEVNEEVTEAKVEELRKRNINEFKVLFIDNLNILPALRDTLMQDKISTPEEAIMEIYRRLRPGDPPTPETATNLFVNLFFNAERYDLSKVGRLKLNYKFGIEEPLENTVLTKRDILEVVRFLIDLKNGKPNKDVDDIDHLGNRRVRAVGELLENQYRIGLVRMERAIKERMSLQEIETLMPHDLINAKPVTAVIKEFFGSSQLSQFMDQTNPLSEVTHKRRLSALGPGGLTRERAGFEVRDVHSTHYGRICPIETPEGPNIGLIASLSTYARVNEYGFVETPYRKVEKGRVTDEVTFYSALEEEKHIIAQANAPVDKKGNFTEAKVWCRKEGEYIYVRPDEVDLMDVSPNQLVSVAASLVPFLENDDANRALMGSNMQRQAVPLLRTQAPLVGTGIEAIVARDSGVTTVAKRDGVVQSVDASRIVVKADVPTSATDVANEVDIYNLIKYQRSNQNTCINQKPIVKPGERVKKGDVIADGPATEMGELALGQNVVVAFMPWQGYNFEDSILLSERLIKEDVFTSVHIEEFECVARDTKLGKEEITRDIPNVGEEALKDLDESGIIRIGAEVKPGDILVGKITPKGETQLSPEEKLLRAIFGEKAGDVRDSSLRVPPGVSGTVINAKVFSRKGVEKDERAKAIEEMEEAKLLKDQNDEIKIIQDSAFQKIRRLLLGKEVTARLVDDKGEQLLKKGDVLDDALLDTVPQRYWGEIAVAGDVQDLARKIIENFEEQKELVKLLFGEKIGRLKKGDELPPGVIKMVKVYVAIKRKLAVGDKMAGRHGNKGVVSRVLPEEDLPYLEDGTPVDIVLNPLGVPSRMNVGQILETHLGWAARNVGLRLQEMIEKEWGADPLRKKLKAAFAGTEGGPVGERLAALIEDVPEKELPKLVQKLRRGMHVATPVFDGAREDEMKALMEEGSATLQSILFDGRTGEPFDQDVTVGVMYMLKLHHLVDEKIHARSIGPYSLVTQQPLGGKAQFGGQRLGEMEVWAMEAYGAAYSLQEFLTVKSDDVVGRTRMYEAIVKGENTLESGLPESFNVLIKELQSLALDVELLETPEAQAAREAAERDLGGGPLGAPRGAVASGEKSSA</sequence>